<gene>
    <name type="ORF">SPAC6C3.03c</name>
</gene>
<proteinExistence type="predicted"/>
<keyword id="KW-1185">Reference proteome</keyword>
<protein>
    <recommendedName>
        <fullName>Uncharacterized protein C6C3.03c</fullName>
    </recommendedName>
</protein>
<feature type="chain" id="PRO_0000116585" description="Uncharacterized protein C6C3.03c">
    <location>
        <begin position="1"/>
        <end position="100"/>
    </location>
</feature>
<accession>Q9Y7I3</accession>
<dbReference type="EMBL" id="CU329670">
    <property type="protein sequence ID" value="CAB40279.1"/>
    <property type="molecule type" value="Genomic_DNA"/>
</dbReference>
<dbReference type="PIR" id="T39027">
    <property type="entry name" value="T39027"/>
</dbReference>
<dbReference type="RefSeq" id="NP_593717.1">
    <property type="nucleotide sequence ID" value="NM_001019148.2"/>
</dbReference>
<dbReference type="BioGRID" id="279713">
    <property type="interactions" value="7"/>
</dbReference>
<dbReference type="iPTMnet" id="Q9Y7I3"/>
<dbReference type="PaxDb" id="4896-SPAC6C3.03c.1"/>
<dbReference type="EnsemblFungi" id="SPAC6C3.03c.1">
    <property type="protein sequence ID" value="SPAC6C3.03c.1:pep"/>
    <property type="gene ID" value="SPAC6C3.03c"/>
</dbReference>
<dbReference type="PomBase" id="SPAC6C3.03c"/>
<dbReference type="VEuPathDB" id="FungiDB:SPAC6C3.03c"/>
<dbReference type="HOGENOM" id="CLU_2307674_0_0_1"/>
<dbReference type="InParanoid" id="Q9Y7I3"/>
<dbReference type="PRO" id="PR:Q9Y7I3"/>
<dbReference type="Proteomes" id="UP000002485">
    <property type="component" value="Chromosome I"/>
</dbReference>
<dbReference type="GO" id="GO:0005739">
    <property type="term" value="C:mitochondrion"/>
    <property type="evidence" value="ECO:0007005"/>
    <property type="project" value="PomBase"/>
</dbReference>
<sequence>MDVFFLGLLVVIAIFTNAKRYSSFRFLFPSKNLDPNETKWGWNIRIATFRSLLNTIPSIPHWRTMWGTVRVGIVHTPSAKVRERVDCSYYFLARGFKTQK</sequence>
<organism>
    <name type="scientific">Schizosaccharomyces pombe (strain 972 / ATCC 24843)</name>
    <name type="common">Fission yeast</name>
    <dbReference type="NCBI Taxonomy" id="284812"/>
    <lineage>
        <taxon>Eukaryota</taxon>
        <taxon>Fungi</taxon>
        <taxon>Dikarya</taxon>
        <taxon>Ascomycota</taxon>
        <taxon>Taphrinomycotina</taxon>
        <taxon>Schizosaccharomycetes</taxon>
        <taxon>Schizosaccharomycetales</taxon>
        <taxon>Schizosaccharomycetaceae</taxon>
        <taxon>Schizosaccharomyces</taxon>
    </lineage>
</organism>
<reference key="1">
    <citation type="journal article" date="2002" name="Nature">
        <title>The genome sequence of Schizosaccharomyces pombe.</title>
        <authorList>
            <person name="Wood V."/>
            <person name="Gwilliam R."/>
            <person name="Rajandream M.A."/>
            <person name="Lyne M.H."/>
            <person name="Lyne R."/>
            <person name="Stewart A."/>
            <person name="Sgouros J.G."/>
            <person name="Peat N."/>
            <person name="Hayles J."/>
            <person name="Baker S.G."/>
            <person name="Basham D."/>
            <person name="Bowman S."/>
            <person name="Brooks K."/>
            <person name="Brown D."/>
            <person name="Brown S."/>
            <person name="Chillingworth T."/>
            <person name="Churcher C.M."/>
            <person name="Collins M."/>
            <person name="Connor R."/>
            <person name="Cronin A."/>
            <person name="Davis P."/>
            <person name="Feltwell T."/>
            <person name="Fraser A."/>
            <person name="Gentles S."/>
            <person name="Goble A."/>
            <person name="Hamlin N."/>
            <person name="Harris D.E."/>
            <person name="Hidalgo J."/>
            <person name="Hodgson G."/>
            <person name="Holroyd S."/>
            <person name="Hornsby T."/>
            <person name="Howarth S."/>
            <person name="Huckle E.J."/>
            <person name="Hunt S."/>
            <person name="Jagels K."/>
            <person name="James K.D."/>
            <person name="Jones L."/>
            <person name="Jones M."/>
            <person name="Leather S."/>
            <person name="McDonald S."/>
            <person name="McLean J."/>
            <person name="Mooney P."/>
            <person name="Moule S."/>
            <person name="Mungall K.L."/>
            <person name="Murphy L.D."/>
            <person name="Niblett D."/>
            <person name="Odell C."/>
            <person name="Oliver K."/>
            <person name="O'Neil S."/>
            <person name="Pearson D."/>
            <person name="Quail M.A."/>
            <person name="Rabbinowitsch E."/>
            <person name="Rutherford K.M."/>
            <person name="Rutter S."/>
            <person name="Saunders D."/>
            <person name="Seeger K."/>
            <person name="Sharp S."/>
            <person name="Skelton J."/>
            <person name="Simmonds M.N."/>
            <person name="Squares R."/>
            <person name="Squares S."/>
            <person name="Stevens K."/>
            <person name="Taylor K."/>
            <person name="Taylor R.G."/>
            <person name="Tivey A."/>
            <person name="Walsh S.V."/>
            <person name="Warren T."/>
            <person name="Whitehead S."/>
            <person name="Woodward J.R."/>
            <person name="Volckaert G."/>
            <person name="Aert R."/>
            <person name="Robben J."/>
            <person name="Grymonprez B."/>
            <person name="Weltjens I."/>
            <person name="Vanstreels E."/>
            <person name="Rieger M."/>
            <person name="Schaefer M."/>
            <person name="Mueller-Auer S."/>
            <person name="Gabel C."/>
            <person name="Fuchs M."/>
            <person name="Duesterhoeft A."/>
            <person name="Fritzc C."/>
            <person name="Holzer E."/>
            <person name="Moestl D."/>
            <person name="Hilbert H."/>
            <person name="Borzym K."/>
            <person name="Langer I."/>
            <person name="Beck A."/>
            <person name="Lehrach H."/>
            <person name="Reinhardt R."/>
            <person name="Pohl T.M."/>
            <person name="Eger P."/>
            <person name="Zimmermann W."/>
            <person name="Wedler H."/>
            <person name="Wambutt R."/>
            <person name="Purnelle B."/>
            <person name="Goffeau A."/>
            <person name="Cadieu E."/>
            <person name="Dreano S."/>
            <person name="Gloux S."/>
            <person name="Lelaure V."/>
            <person name="Mottier S."/>
            <person name="Galibert F."/>
            <person name="Aves S.J."/>
            <person name="Xiang Z."/>
            <person name="Hunt C."/>
            <person name="Moore K."/>
            <person name="Hurst S.M."/>
            <person name="Lucas M."/>
            <person name="Rochet M."/>
            <person name="Gaillardin C."/>
            <person name="Tallada V.A."/>
            <person name="Garzon A."/>
            <person name="Thode G."/>
            <person name="Daga R.R."/>
            <person name="Cruzado L."/>
            <person name="Jimenez J."/>
            <person name="Sanchez M."/>
            <person name="del Rey F."/>
            <person name="Benito J."/>
            <person name="Dominguez A."/>
            <person name="Revuelta J.L."/>
            <person name="Moreno S."/>
            <person name="Armstrong J."/>
            <person name="Forsburg S.L."/>
            <person name="Cerutti L."/>
            <person name="Lowe T."/>
            <person name="McCombie W.R."/>
            <person name="Paulsen I."/>
            <person name="Potashkin J."/>
            <person name="Shpakovski G.V."/>
            <person name="Ussery D."/>
            <person name="Barrell B.G."/>
            <person name="Nurse P."/>
        </authorList>
    </citation>
    <scope>NUCLEOTIDE SEQUENCE [LARGE SCALE GENOMIC DNA]</scope>
    <source>
        <strain>972 / ATCC 24843</strain>
    </source>
</reference>
<name>YD53_SCHPO</name>